<protein>
    <recommendedName>
        <fullName evidence="3">3-oxo-tetronate kinase</fullName>
        <ecNumber evidence="2">2.7.1.217</ecNumber>
    </recommendedName>
    <alternativeName>
        <fullName evidence="4">3-dehydrotetronate 4-kinase</fullName>
    </alternativeName>
</protein>
<gene>
    <name evidence="3" type="primary">otnK</name>
    <name evidence="5" type="ordered locus">PFL_3345</name>
</gene>
<dbReference type="EC" id="2.7.1.217" evidence="2"/>
<dbReference type="EMBL" id="CP000076">
    <property type="protein sequence ID" value="AAY92614.1"/>
    <property type="molecule type" value="Genomic_DNA"/>
</dbReference>
<dbReference type="RefSeq" id="WP_011061627.1">
    <property type="nucleotide sequence ID" value="NC_004129.6"/>
</dbReference>
<dbReference type="SMR" id="Q4KBD3"/>
<dbReference type="STRING" id="220664.PFL_3345"/>
<dbReference type="GeneID" id="57476364"/>
<dbReference type="KEGG" id="pfl:PFL_3345"/>
<dbReference type="PATRIC" id="fig|220664.5.peg.3414"/>
<dbReference type="eggNOG" id="COG3395">
    <property type="taxonomic scope" value="Bacteria"/>
</dbReference>
<dbReference type="HOGENOM" id="CLU_029424_1_0_6"/>
<dbReference type="Proteomes" id="UP000008540">
    <property type="component" value="Chromosome"/>
</dbReference>
<dbReference type="GO" id="GO:0005524">
    <property type="term" value="F:ATP binding"/>
    <property type="evidence" value="ECO:0007669"/>
    <property type="project" value="UniProtKB-KW"/>
</dbReference>
<dbReference type="GO" id="GO:0016301">
    <property type="term" value="F:kinase activity"/>
    <property type="evidence" value="ECO:0007669"/>
    <property type="project" value="UniProtKB-KW"/>
</dbReference>
<dbReference type="Gene3D" id="3.40.980.20">
    <property type="entry name" value="Four-carbon acid sugar kinase, nucleotide binding domain"/>
    <property type="match status" value="1"/>
</dbReference>
<dbReference type="Gene3D" id="3.40.50.10840">
    <property type="entry name" value="Putative sugar-binding, N-terminal domain"/>
    <property type="match status" value="1"/>
</dbReference>
<dbReference type="InterPro" id="IPR010737">
    <property type="entry name" value="4-carb_acid_sugar_kinase_N"/>
</dbReference>
<dbReference type="InterPro" id="IPR037051">
    <property type="entry name" value="4-carb_acid_sugar_kinase_N_sf"/>
</dbReference>
<dbReference type="InterPro" id="IPR031475">
    <property type="entry name" value="NBD_C"/>
</dbReference>
<dbReference type="InterPro" id="IPR042213">
    <property type="entry name" value="NBD_C_sf"/>
</dbReference>
<dbReference type="InterPro" id="IPR050007">
    <property type="entry name" value="OtnK"/>
</dbReference>
<dbReference type="NCBIfam" id="NF043035">
    <property type="entry name" value="OxoTetrKin"/>
    <property type="match status" value="1"/>
</dbReference>
<dbReference type="Pfam" id="PF17042">
    <property type="entry name" value="NBD_C"/>
    <property type="match status" value="1"/>
</dbReference>
<dbReference type="Pfam" id="PF07005">
    <property type="entry name" value="SBD_N"/>
    <property type="match status" value="1"/>
</dbReference>
<dbReference type="SUPFAM" id="SSF142764">
    <property type="entry name" value="YgbK-like"/>
    <property type="match status" value="1"/>
</dbReference>
<keyword id="KW-0067">ATP-binding</keyword>
<keyword id="KW-0119">Carbohydrate metabolism</keyword>
<keyword id="KW-0418">Kinase</keyword>
<keyword id="KW-0547">Nucleotide-binding</keyword>
<keyword id="KW-0808">Transferase</keyword>
<evidence type="ECO:0000250" key="1">
    <source>
        <dbReference type="UniProtKB" id="Q0KBC8"/>
    </source>
</evidence>
<evidence type="ECO:0000269" key="2">
    <source>
    </source>
</evidence>
<evidence type="ECO:0000303" key="3">
    <source>
    </source>
</evidence>
<evidence type="ECO:0000305" key="4"/>
<evidence type="ECO:0000312" key="5">
    <source>
        <dbReference type="EMBL" id="AAY92614.1"/>
    </source>
</evidence>
<sequence length="430" mass="44568">MTISNPRPLLGCIADDFTGATDLANMLVRGGMRTVQSIGIPSAEVAAGLDADAVVIALKSRTTAASEAVAESLAALQWLRDQGCEQIFFKYCSTFDSTAAGNIGQVSEALLEALGSDFTLACPAFPENGRTIFRGHLFVQDQLLSESGMQHHPLTPMTDANLVRVLQSQTRLPVGLLRYDSIAQGVEAVRSRIAELRGQGVALAIADALSDADLYTLGAACADLPLLTGGSGLALGLPENFRRAGKLRDLDAASLPKVAGGEVVLAGSASLATNAQVDAWLEAERPAWRIDPLALAAGEAVVEQALAFAREQQGTVLIYATSTPEEVKAVQRQLGAERAGALVENALGEIARGLRDSGVRRFVVAGGETSGAVVKALDVRLLQIGAQIDPGVPATVSSGGEPLALALKSGNFGGRDFFSKALGQLAGGQA</sequence>
<comment type="function">
    <text evidence="2">Catalyzes the ATP-dependent phosphorylation of 3-oxo-tetronate to 3-oxo-tetronate 4-phosphate.</text>
</comment>
<comment type="catalytic activity">
    <reaction evidence="2">
        <text>3-dehydro-L-erythronate + ATP = 3-dehydro-4-O-phospho-L-erythronate + ADP + H(+)</text>
        <dbReference type="Rhea" id="RHEA:52552"/>
        <dbReference type="ChEBI" id="CHEBI:15378"/>
        <dbReference type="ChEBI" id="CHEBI:30616"/>
        <dbReference type="ChEBI" id="CHEBI:136592"/>
        <dbReference type="ChEBI" id="CHEBI:136670"/>
        <dbReference type="ChEBI" id="CHEBI:456216"/>
        <dbReference type="EC" id="2.7.1.217"/>
    </reaction>
</comment>
<comment type="catalytic activity">
    <reaction evidence="2">
        <text>3-dehydro-D-erythronate + ATP = 3-dehydro-4-O-phospho-D-erythronate + ADP + H(+)</text>
        <dbReference type="Rhea" id="RHEA:52556"/>
        <dbReference type="ChEBI" id="CHEBI:15378"/>
        <dbReference type="ChEBI" id="CHEBI:30616"/>
        <dbReference type="ChEBI" id="CHEBI:57958"/>
        <dbReference type="ChEBI" id="CHEBI:136593"/>
        <dbReference type="ChEBI" id="CHEBI:456216"/>
        <dbReference type="EC" id="2.7.1.217"/>
    </reaction>
</comment>
<comment type="similarity">
    <text evidence="4">Belongs to the four-carbon acid sugar kinase family.</text>
</comment>
<proteinExistence type="evidence at protein level"/>
<accession>Q4KBD3</accession>
<reference key="1">
    <citation type="journal article" date="2005" name="Nat. Biotechnol.">
        <title>Complete genome sequence of the plant commensal Pseudomonas fluorescens Pf-5.</title>
        <authorList>
            <person name="Paulsen I.T."/>
            <person name="Press C.M."/>
            <person name="Ravel J."/>
            <person name="Kobayashi D.Y."/>
            <person name="Myers G.S.A."/>
            <person name="Mavrodi D.V."/>
            <person name="DeBoy R.T."/>
            <person name="Seshadri R."/>
            <person name="Ren Q."/>
            <person name="Madupu R."/>
            <person name="Dodson R.J."/>
            <person name="Durkin A.S."/>
            <person name="Brinkac L.M."/>
            <person name="Daugherty S.C."/>
            <person name="Sullivan S.A."/>
            <person name="Rosovitz M.J."/>
            <person name="Gwinn M.L."/>
            <person name="Zhou L."/>
            <person name="Schneider D.J."/>
            <person name="Cartinhour S.W."/>
            <person name="Nelson W.C."/>
            <person name="Weidman J."/>
            <person name="Watkins K."/>
            <person name="Tran K."/>
            <person name="Khouri H."/>
            <person name="Pierson E.A."/>
            <person name="Pierson L.S. III"/>
            <person name="Thomashow L.S."/>
            <person name="Loper J.E."/>
        </authorList>
    </citation>
    <scope>NUCLEOTIDE SEQUENCE [LARGE SCALE GENOMIC DNA]</scope>
    <source>
        <strain>ATCC BAA-477 / NRRL B-23932 / Pf-5</strain>
    </source>
</reference>
<reference key="2">
    <citation type="journal article" date="2016" name="Proc. Natl. Acad. Sci. U.S.A.">
        <title>Assignment of function to a domain of unknown function: DUF1537 is a new kinase family in catabolic pathways for acid sugars.</title>
        <authorList>
            <person name="Zhang X."/>
            <person name="Carter M.S."/>
            <person name="Vetting M.W."/>
            <person name="San Francisco B."/>
            <person name="Zhao S."/>
            <person name="Al-Obaidi N.F."/>
            <person name="Solbiati J.O."/>
            <person name="Thiaville J.J."/>
            <person name="de Crecy-Lagard V."/>
            <person name="Jacobson M.P."/>
            <person name="Almo S.C."/>
            <person name="Gerlt J.A."/>
        </authorList>
    </citation>
    <scope>FUNCTION</scope>
    <scope>CATALYTIC ACTIVITY</scope>
    <source>
        <strain>ATCC BAA-477 / NRRL B-23932 / Pf-5</strain>
    </source>
</reference>
<name>OTNK_PSEF5</name>
<organism>
    <name type="scientific">Pseudomonas fluorescens (strain ATCC BAA-477 / NRRL B-23932 / Pf-5)</name>
    <dbReference type="NCBI Taxonomy" id="220664"/>
    <lineage>
        <taxon>Bacteria</taxon>
        <taxon>Pseudomonadati</taxon>
        <taxon>Pseudomonadota</taxon>
        <taxon>Gammaproteobacteria</taxon>
        <taxon>Pseudomonadales</taxon>
        <taxon>Pseudomonadaceae</taxon>
        <taxon>Pseudomonas</taxon>
    </lineage>
</organism>
<feature type="chain" id="PRO_0000439684" description="3-oxo-tetronate kinase">
    <location>
        <begin position="1"/>
        <end position="430"/>
    </location>
</feature>
<feature type="binding site" evidence="1">
    <location>
        <position position="268"/>
    </location>
    <ligand>
        <name>ATP</name>
        <dbReference type="ChEBI" id="CHEBI:30616"/>
    </ligand>
</feature>
<feature type="binding site" evidence="1">
    <location>
        <begin position="366"/>
        <end position="369"/>
    </location>
    <ligand>
        <name>ATP</name>
        <dbReference type="ChEBI" id="CHEBI:30616"/>
    </ligand>
</feature>
<feature type="binding site" evidence="1">
    <location>
        <position position="410"/>
    </location>
    <ligand>
        <name>ATP</name>
        <dbReference type="ChEBI" id="CHEBI:30616"/>
    </ligand>
</feature>